<gene>
    <name evidence="10" type="primary">xol-1</name>
    <name evidence="10" type="ORF">C18A11.5</name>
</gene>
<keyword id="KW-0002">3D-structure</keyword>
<keyword id="KW-0025">Alternative splicing</keyword>
<keyword id="KW-0217">Developmental protein</keyword>
<keyword id="KW-0221">Differentiation</keyword>
<keyword id="KW-0539">Nucleus</keyword>
<keyword id="KW-1185">Reference proteome</keyword>
<proteinExistence type="evidence at protein level"/>
<reference key="1">
    <citation type="journal article" date="1995" name="Cell">
        <title>xol-1 acts as an early switch in the C. elegans male/hermaphrodite decision.</title>
        <authorList>
            <person name="Rhind N.R."/>
            <person name="Miller L.M."/>
            <person name="Kopczynski J.B."/>
            <person name="Meyer B.J."/>
        </authorList>
    </citation>
    <scope>NUCLEOTIDE SEQUENCE [GENOMIC DNA]</scope>
    <scope>ALTERNATIVE SPLICING (ISOFORMS B AND C)</scope>
    <scope>FUNCTION</scope>
    <scope>SUBCELLULAR LOCATION</scope>
    <scope>DEVELOPMENTAL STAGE</scope>
    <scope>DISRUPTION PHENOTYPE</scope>
    <source>
        <strain>Bristol N2</strain>
    </source>
</reference>
<reference key="2">
    <citation type="journal article" date="1998" name="Science">
        <title>Genome sequence of the nematode C. elegans: a platform for investigating biology.</title>
        <authorList>
            <consortium name="The C. elegans sequencing consortium"/>
        </authorList>
    </citation>
    <scope>NUCLEOTIDE SEQUENCE [LARGE SCALE GENOMIC DNA]</scope>
    <source>
        <strain>Bristol N2</strain>
    </source>
</reference>
<reference key="3">
    <citation type="journal article" date="1988" name="Cell">
        <title>xol-1: a gene that controls the male modes of both sex determination and X chromosome dosage compensation in C. elegans.</title>
        <authorList>
            <person name="Miller L.M."/>
            <person name="Plenefisch J.D."/>
            <person name="Casson L.P."/>
            <person name="Meyer B.J."/>
        </authorList>
    </citation>
    <scope>FUNCTION</scope>
</reference>
<reference key="4">
    <citation type="journal article" date="1994" name="Development">
        <title>Identification of a candidate primary sex determination locus, fox-1, on the X chromosome of Caenorhabditis elegans.</title>
        <authorList>
            <person name="Hodgkin J."/>
            <person name="Zellan J.D."/>
            <person name="Albertson D.G."/>
        </authorList>
    </citation>
    <scope>INDUCTION</scope>
</reference>
<reference key="5">
    <citation type="journal article" date="1997" name="Nature">
        <title>X-chromosome-counting mechanisms that determine nematode sex.</title>
        <authorList>
            <person name="Nicoll M."/>
            <person name="Akerib C.C."/>
            <person name="Meyer B.J."/>
        </authorList>
    </citation>
    <scope>FUNCTION</scope>
    <scope>INDUCTION</scope>
</reference>
<reference key="6">
    <citation type="journal article" date="1999" name="Genetics">
        <title>Genetic and molecular analysis of fox-1, a numerator element involved in Caenorhabditis elegans primary sex determination.</title>
        <authorList>
            <person name="Skipper M."/>
            <person name="Milne C.A."/>
            <person name="Hodgkin J."/>
        </authorList>
    </citation>
    <scope>INDUCTION</scope>
</reference>
<reference key="7">
    <citation type="journal article" date="1998" name="Nature">
        <title>The nuclear hormone receptor SEX-1 is an X-chromosome signal that determines nematode sex.</title>
        <authorList>
            <person name="Carmi I."/>
            <person name="Kopczynski J.B."/>
            <person name="Meyer B.J."/>
        </authorList>
    </citation>
    <scope>INDUCTION</scope>
</reference>
<reference key="8">
    <citation type="journal article" date="2020" name="Elife">
        <title>Dose-dependent action of the RNA binding protein FOX-1 to relay X-chromosome number and determine C. elegans sex.</title>
        <authorList>
            <person name="Farboud B."/>
            <person name="Novak C.S."/>
            <person name="Nicoll M."/>
            <person name="Quiogue A."/>
            <person name="Meyer B.J."/>
        </authorList>
    </citation>
    <scope>FUNCTION</scope>
</reference>
<reference key="9">
    <citation type="journal article" date="2003" name="Genes Dev.">
        <title>XOL-1, primary determinant of sexual fate in C. elegans, is a GHMP kinase family member and a structural prototype for a class of developmental regulators.</title>
        <authorList>
            <person name="Luz J.G."/>
            <person name="Hassig C.A."/>
            <person name="Pickle C."/>
            <person name="Godzik A."/>
            <person name="Meyer B.J."/>
            <person name="Wilson I.A."/>
        </authorList>
    </citation>
    <scope>X-RAY CRYSTALLOGRAPHY (1.55 ANGSTROMS)</scope>
    <scope>LACK OF ATP-BINDING</scope>
</reference>
<protein>
    <recommendedName>
        <fullName>XO lethal protein 1</fullName>
    </recommendedName>
</protein>
<comment type="function">
    <text evidence="2 3 4 6">Sex-determining factor that is required for sexual differentiation and X chromosome dosage compensation to promote male development (PubMed:33372658, PubMed:7813020, PubMed:9217163). High expression during gastrulation triggers male development, while low expression at that time triggers hermaphrodite development. Although related to GHMP kinase, its mode of action remains unclear.</text>
</comment>
<comment type="subcellular location">
    <subcellularLocation>
        <location evidence="4">Nucleus</location>
    </subcellularLocation>
</comment>
<comment type="alternative products">
    <event type="alternative splicing"/>
    <isoform>
        <id>Q23229-1</id>
        <name evidence="10">b</name>
        <sequence type="displayed"/>
    </isoform>
    <isoform>
        <id>Q23229-3</id>
        <name evidence="11">c</name>
        <sequence type="described" ref="VSP_016414"/>
    </isoform>
</comment>
<comment type="developmental stage">
    <text evidence="4">Specifically expressed at high levels in pre-comma stage XO embryos. Also present at low levels throughout other larval stages in XO animals, but are nearly undetectable in XX larvae and adults of both sexes.</text>
</comment>
<comment type="developmental stage">
    <molecule>Isoform b</molecule>
    <text evidence="3">Most abundant in male embryos (PubMed:33372658). Expressed at low levels in hermaphrodite embryos (PubMed:33372658).</text>
</comment>
<comment type="induction">
    <text evidence="5 6 7 8">Down-regulated by at least 4 X-linked genes, termed X-signal elements including fox-1 and sex-1 (PubMed:9217163). High levels of xol-1 in males correlate with low sdc-2 expression, preventing dosage compensation. Conversely, low levels of xol-1 in hermaphrodites correlate with high sdc-2 expression and the assembly of the dosage compensation complex on the X chromosome.</text>
</comment>
<comment type="disruption phenotype">
    <text evidence="4">Worms are XO-lethal, due to inappropriate activating dosage compensation where only 1 X chromosome is present. In contrast xol-1 overexpression is XX-lethal, deactivating the dosage compensation pathway and elevating the expression of X chromosome genes to lethal levels in hermaphrodites.</text>
</comment>
<comment type="miscellaneous">
    <molecule>Isoform b</molecule>
    <text evidence="3">Only functional isoform (PubMed:33372658). Produced by alternative splicing of intron 6 which results in the deletion of intron 6 and retention of exon 7 coding sequences (PubMed:33372658).</text>
</comment>
<comment type="miscellaneous">
    <molecule>Isoform c</molecule>
    <text evidence="3 4">Inactive isoform (PubMed:33372658, PubMed:7813020). Produced by alternative splicing of intron 6 which results in the retention of intron 6 and deletion of exon 7 coding sequences (PubMed:33372658). An in-frame UAA stop codon within intron 6 prematurely terminates translation (PubMed:7813020). Intron 6 retention and exon 7 deletion can also be due to use of an alternative 3' splice acceptor site in the 3'UTR resulting in trans-splicing to the transcripts of unrelated genes (PubMed:33372658).</text>
</comment>
<comment type="similarity">
    <text evidence="9">Belongs to the GHMP kinase family. Xol-1 subfamily.</text>
</comment>
<comment type="caution">
    <text evidence="9">Although clearly related the GHMP kinase family as demonstrated by the 3D-structure, it lacks many conserved feature of GHMP kinases and probably does not bind ATP, suggesting that it probably does not have kinase activity.</text>
</comment>
<comment type="sequence caution" evidence="9">
    <conflict type="erroneous gene model prediction">
        <sequence resource="EMBL-CDS" id="AAA67048"/>
    </conflict>
</comment>
<evidence type="ECO:0000256" key="1">
    <source>
        <dbReference type="SAM" id="MobiDB-lite"/>
    </source>
</evidence>
<evidence type="ECO:0000269" key="2">
    <source>
    </source>
</evidence>
<evidence type="ECO:0000269" key="3">
    <source>
    </source>
</evidence>
<evidence type="ECO:0000269" key="4">
    <source>
    </source>
</evidence>
<evidence type="ECO:0000269" key="5">
    <source>
    </source>
</evidence>
<evidence type="ECO:0000269" key="6">
    <source>
    </source>
</evidence>
<evidence type="ECO:0000269" key="7">
    <source>
    </source>
</evidence>
<evidence type="ECO:0000269" key="8">
    <source>
    </source>
</evidence>
<evidence type="ECO:0000305" key="9"/>
<evidence type="ECO:0000312" key="10">
    <source>
        <dbReference type="WormBase" id="C18A11.5b"/>
    </source>
</evidence>
<evidence type="ECO:0000312" key="11">
    <source>
        <dbReference type="WormBase" id="C18A11.5c"/>
    </source>
</evidence>
<evidence type="ECO:0007829" key="12">
    <source>
        <dbReference type="PDB" id="1MG7"/>
    </source>
</evidence>
<accession>Q23229</accession>
<accession>Q18064</accession>
<accession>Q23230</accession>
<accession>Q23231</accession>
<accession>Q7JP92</accession>
<name>XOL1_CAEEL</name>
<organism>
    <name type="scientific">Caenorhabditis elegans</name>
    <dbReference type="NCBI Taxonomy" id="6239"/>
    <lineage>
        <taxon>Eukaryota</taxon>
        <taxon>Metazoa</taxon>
        <taxon>Ecdysozoa</taxon>
        <taxon>Nematoda</taxon>
        <taxon>Chromadorea</taxon>
        <taxon>Rhabditida</taxon>
        <taxon>Rhabditina</taxon>
        <taxon>Rhabditomorpha</taxon>
        <taxon>Rhabditoidea</taxon>
        <taxon>Rhabditidae</taxon>
        <taxon>Peloderinae</taxon>
        <taxon>Caenorhabditis</taxon>
    </lineage>
</organism>
<feature type="chain" id="PRO_0000156673" description="XO lethal protein 1">
    <location>
        <begin position="1"/>
        <end position="417"/>
    </location>
</feature>
<feature type="region of interest" description="Disordered" evidence="1">
    <location>
        <begin position="373"/>
        <end position="417"/>
    </location>
</feature>
<feature type="compositionally biased region" description="Acidic residues" evidence="1">
    <location>
        <begin position="391"/>
        <end position="403"/>
    </location>
</feature>
<feature type="splice variant" id="VSP_016414" description="In isoform c." evidence="9">
    <original>IAIATESRQSVSSVSFDLLKLGPGASLVTLANSRRFEPECRVVLQIEVKPVSPGETSSEGISDEHHYEEYDEDDIMEEEEAPSARQDDTYDEDEE</original>
    <variation>YSAQYYLSMTHFSNRISIPLFSSLVFLTVSIVINAMCHKSIFCKRVISRLPFPHCQILKLSHFSTGRTFLSYLSIIAKCTPISHINQSNILPAQNKIFAIKQFS</variation>
    <location>
        <begin position="323"/>
        <end position="417"/>
    </location>
</feature>
<feature type="sequence conflict" description="In Ref. 1; AAA67048." evidence="9" ref="1">
    <original>IAIATESRQSVSSVSFDLLKLGPGASLVTLANSRRFEPECRVVLQIEVKPVSPGETSSEGISDEHHYEEYDEDDIMEEEEAPSARQDDTYDEDEE</original>
    <variation>VSYHIICYFHINCMFDKTLFTKIFCSHIVFTSR</variation>
    <location>
        <begin position="323"/>
        <end position="417"/>
    </location>
</feature>
<feature type="strand" evidence="12">
    <location>
        <begin position="9"/>
        <end position="21"/>
    </location>
</feature>
<feature type="helix" evidence="12">
    <location>
        <begin position="23"/>
        <end position="26"/>
    </location>
</feature>
<feature type="strand" evidence="12">
    <location>
        <begin position="40"/>
        <end position="50"/>
    </location>
</feature>
<feature type="turn" evidence="12">
    <location>
        <begin position="51"/>
        <end position="53"/>
    </location>
</feature>
<feature type="strand" evidence="12">
    <location>
        <begin position="54"/>
        <end position="72"/>
    </location>
</feature>
<feature type="helix" evidence="12">
    <location>
        <begin position="77"/>
        <end position="79"/>
    </location>
</feature>
<feature type="strand" evidence="12">
    <location>
        <begin position="80"/>
        <end position="82"/>
    </location>
</feature>
<feature type="helix" evidence="12">
    <location>
        <begin position="91"/>
        <end position="105"/>
    </location>
</feature>
<feature type="strand" evidence="12">
    <location>
        <begin position="108"/>
        <end position="116"/>
    </location>
</feature>
<feature type="helix" evidence="12">
    <location>
        <begin position="127"/>
        <end position="139"/>
    </location>
</feature>
<feature type="helix" evidence="12">
    <location>
        <begin position="148"/>
        <end position="161"/>
    </location>
</feature>
<feature type="helix" evidence="12">
    <location>
        <begin position="169"/>
        <end position="178"/>
    </location>
</feature>
<feature type="strand" evidence="12">
    <location>
        <begin position="179"/>
        <end position="186"/>
    </location>
</feature>
<feature type="helix" evidence="12">
    <location>
        <begin position="201"/>
        <end position="206"/>
    </location>
</feature>
<feature type="strand" evidence="12">
    <location>
        <begin position="207"/>
        <end position="214"/>
    </location>
</feature>
<feature type="helix" evidence="12">
    <location>
        <begin position="229"/>
        <end position="241"/>
    </location>
</feature>
<feature type="strand" evidence="12">
    <location>
        <begin position="245"/>
        <end position="247"/>
    </location>
</feature>
<feature type="helix" evidence="12">
    <location>
        <begin position="249"/>
        <end position="251"/>
    </location>
</feature>
<feature type="helix" evidence="12">
    <location>
        <begin position="253"/>
        <end position="266"/>
    </location>
</feature>
<feature type="helix" evidence="12">
    <location>
        <begin position="274"/>
        <end position="289"/>
    </location>
</feature>
<feature type="strand" evidence="12">
    <location>
        <begin position="293"/>
        <end position="298"/>
    </location>
</feature>
<feature type="strand" evidence="12">
    <location>
        <begin position="303"/>
        <end position="308"/>
    </location>
</feature>
<feature type="helix" evidence="12">
    <location>
        <begin position="311"/>
        <end position="313"/>
    </location>
</feature>
<feature type="helix" evidence="12">
    <location>
        <begin position="315"/>
        <end position="328"/>
    </location>
</feature>
<feature type="strand" evidence="12">
    <location>
        <begin position="335"/>
        <end position="341"/>
    </location>
</feature>
<feature type="turn" evidence="12">
    <location>
        <begin position="352"/>
        <end position="354"/>
    </location>
</feature>
<feature type="helix" evidence="12">
    <location>
        <begin position="355"/>
        <end position="357"/>
    </location>
</feature>
<feature type="strand" evidence="12">
    <location>
        <begin position="361"/>
        <end position="372"/>
    </location>
</feature>
<dbReference type="EMBL" id="L35129">
    <property type="protein sequence ID" value="AAA67048.1"/>
    <property type="status" value="ALT_SEQ"/>
    <property type="molecule type" value="Genomic_DNA"/>
</dbReference>
<dbReference type="EMBL" id="L35129">
    <property type="protein sequence ID" value="AAA67049.1"/>
    <property type="molecule type" value="Genomic_DNA"/>
</dbReference>
<dbReference type="EMBL" id="L35129">
    <property type="protein sequence ID" value="AAA67047.1"/>
    <property type="molecule type" value="Genomic_DNA"/>
</dbReference>
<dbReference type="EMBL" id="BX284606">
    <property type="protein sequence ID" value="CCD65063.1"/>
    <property type="molecule type" value="Genomic_DNA"/>
</dbReference>
<dbReference type="EMBL" id="BX284606">
    <property type="protein sequence ID" value="CCD65064.1"/>
    <property type="molecule type" value="Genomic_DNA"/>
</dbReference>
<dbReference type="PIR" id="A55473">
    <property type="entry name" value="A55473"/>
</dbReference>
<dbReference type="PIR" id="B55473">
    <property type="entry name" value="B55473"/>
</dbReference>
<dbReference type="PIR" id="C55473">
    <property type="entry name" value="C55473"/>
</dbReference>
<dbReference type="PIR" id="F89581">
    <property type="entry name" value="F89581"/>
</dbReference>
<dbReference type="RefSeq" id="NP_001024418.1">
    <molecule id="Q23229-1"/>
    <property type="nucleotide sequence ID" value="NM_001029247.3"/>
</dbReference>
<dbReference type="RefSeq" id="NP_001024419.1">
    <molecule id="Q23229-3"/>
    <property type="nucleotide sequence ID" value="NM_001029248.1"/>
</dbReference>
<dbReference type="PDB" id="1MG7">
    <property type="method" value="X-ray"/>
    <property type="resolution" value="1.55 A"/>
    <property type="chains" value="A/B=1-417"/>
</dbReference>
<dbReference type="PDBsum" id="1MG7"/>
<dbReference type="SMR" id="Q23229"/>
<dbReference type="FunCoup" id="Q23229">
    <property type="interactions" value="1267"/>
</dbReference>
<dbReference type="STRING" id="6239.C18A11.5c.1"/>
<dbReference type="PaxDb" id="6239-C18A11.5c"/>
<dbReference type="EnsemblMetazoa" id="C18A11.5b.1">
    <molecule id="Q23229-1"/>
    <property type="protein sequence ID" value="C18A11.5b.1"/>
    <property type="gene ID" value="WBGene00006962"/>
</dbReference>
<dbReference type="EnsemblMetazoa" id="C18A11.5c.1">
    <molecule id="Q23229-3"/>
    <property type="protein sequence ID" value="C18A11.5c.1"/>
    <property type="gene ID" value="WBGene00006962"/>
</dbReference>
<dbReference type="GeneID" id="181061"/>
<dbReference type="KEGG" id="cel:CELE_C18A11.5"/>
<dbReference type="UCSC" id="C18A11.5c">
    <molecule id="Q23229-1"/>
    <property type="organism name" value="c. elegans"/>
</dbReference>
<dbReference type="AGR" id="WB:WBGene00006962"/>
<dbReference type="CTD" id="181061"/>
<dbReference type="WormBase" id="C18A11.5b">
    <molecule id="Q23229-1"/>
    <property type="protein sequence ID" value="CE35709"/>
    <property type="gene ID" value="WBGene00006962"/>
    <property type="gene designation" value="xol-1"/>
</dbReference>
<dbReference type="WormBase" id="C18A11.5c">
    <molecule id="Q23229-3"/>
    <property type="protein sequence ID" value="CE24807"/>
    <property type="gene ID" value="WBGene00006962"/>
    <property type="gene designation" value="xol-1"/>
</dbReference>
<dbReference type="eggNOG" id="ENOG502TITU">
    <property type="taxonomic scope" value="Eukaryota"/>
</dbReference>
<dbReference type="HOGENOM" id="CLU_659271_0_0_1"/>
<dbReference type="InParanoid" id="Q23229"/>
<dbReference type="OMA" id="MEEDSIW"/>
<dbReference type="OrthoDB" id="5790846at2759"/>
<dbReference type="EvolutionaryTrace" id="Q23229"/>
<dbReference type="PRO" id="PR:Q23229"/>
<dbReference type="Proteomes" id="UP000001940">
    <property type="component" value="Chromosome X"/>
</dbReference>
<dbReference type="Bgee" id="WBGene00006962">
    <property type="expression patterns" value="Expressed in embryo and 3 other cell types or tissues"/>
</dbReference>
<dbReference type="GO" id="GO:0005634">
    <property type="term" value="C:nucleus"/>
    <property type="evidence" value="ECO:0007669"/>
    <property type="project" value="UniProtKB-SubCell"/>
</dbReference>
<dbReference type="GO" id="GO:0030154">
    <property type="term" value="P:cell differentiation"/>
    <property type="evidence" value="ECO:0007669"/>
    <property type="project" value="UniProtKB-KW"/>
</dbReference>
<dbReference type="GO" id="GO:0042464">
    <property type="term" value="P:dosage compensation by hypoactivation of X chromosome"/>
    <property type="evidence" value="ECO:0000315"/>
    <property type="project" value="UniProtKB"/>
</dbReference>
<dbReference type="GO" id="GO:0030238">
    <property type="term" value="P:male sex determination"/>
    <property type="evidence" value="ECO:0000315"/>
    <property type="project" value="UniProtKB"/>
</dbReference>
<dbReference type="GO" id="GO:0000366">
    <property type="term" value="P:mRNA alternative trans-splicing"/>
    <property type="evidence" value="ECO:0000314"/>
    <property type="project" value="UniProtKB"/>
</dbReference>
<dbReference type="Gene3D" id="3.30.230.10">
    <property type="match status" value="1"/>
</dbReference>
<dbReference type="Gene3D" id="3.30.70.1000">
    <property type="entry name" value="Switch protein XOL-1, GHMP-like"/>
    <property type="match status" value="1"/>
</dbReference>
<dbReference type="InterPro" id="IPR036554">
    <property type="entry name" value="GHMP_kinase_C_sf"/>
</dbReference>
<dbReference type="InterPro" id="IPR020568">
    <property type="entry name" value="Ribosomal_Su5_D2-typ_SF"/>
</dbReference>
<dbReference type="InterPro" id="IPR014721">
    <property type="entry name" value="Ribsml_uS5_D2-typ_fold_subgr"/>
</dbReference>
<dbReference type="InterPro" id="IPR015193">
    <property type="entry name" value="Xol-1_GHMP-like"/>
</dbReference>
<dbReference type="InterPro" id="IPR015192">
    <property type="entry name" value="Xol-1_N"/>
</dbReference>
<dbReference type="Pfam" id="PF09109">
    <property type="entry name" value="Xol-1_GHMP-like"/>
    <property type="match status" value="1"/>
</dbReference>
<dbReference type="Pfam" id="PF09108">
    <property type="entry name" value="Xol-1_N"/>
    <property type="match status" value="1"/>
</dbReference>
<dbReference type="SUPFAM" id="SSF55060">
    <property type="entry name" value="GHMP Kinase, C-terminal domain"/>
    <property type="match status" value="1"/>
</dbReference>
<dbReference type="SUPFAM" id="SSF54211">
    <property type="entry name" value="Ribosomal protein S5 domain 2-like"/>
    <property type="match status" value="1"/>
</dbReference>
<sequence length="417" mass="47159">MQVEANSERRVKILGIDRSENSPVLTYMETEDDPNFRNSKLAAAPHTVHMMDSGFLAINRQCLVKGKAILAREPKSSNEHMIDDLPKHAHDQHTLSILRDFIDQLKLHNVYEINFYDPLDSSGKLAVIPMLIALWKCMLASETDICDQEVLKSIMNSVIAKFELQIPCKNAVIDATLSGSREEVHIIAEDGSLENSNGTTEHFNKKHDLVFVKTDLHPEDFTPQMFPSQAKAKLLRDAFNNEEDEDTFPDILVPAYMTAHSKNRVRQEDYTCLEVEFDSQVALEKLMNEHEQVEGFEVQQGGILVALKKDSFFDDELIEKIAIAIATESRQSVSSVSFDLLKLGPGASLVTLANSRRFEPECRVVLQIEVKPVSPGETSSEGISDEHHYEEYDEDDIMEEEEAPSARQDDTYDEDEE</sequence>